<proteinExistence type="inferred from homology"/>
<protein>
    <recommendedName>
        <fullName evidence="1">Small ribosomal subunit protein uS7</fullName>
    </recommendedName>
    <alternativeName>
        <fullName evidence="2">30S ribosomal protein S7</fullName>
    </alternativeName>
</protein>
<dbReference type="EMBL" id="CP001186">
    <property type="protein sequence ID" value="ACK97396.1"/>
    <property type="molecule type" value="Genomic_DNA"/>
</dbReference>
<dbReference type="RefSeq" id="WP_001137492.1">
    <property type="nucleotide sequence ID" value="NC_011772.1"/>
</dbReference>
<dbReference type="SMR" id="B7IT15"/>
<dbReference type="GeneID" id="92887799"/>
<dbReference type="KEGG" id="bcg:BCG9842_B5199"/>
<dbReference type="HOGENOM" id="CLU_072226_1_1_9"/>
<dbReference type="Proteomes" id="UP000006744">
    <property type="component" value="Chromosome"/>
</dbReference>
<dbReference type="GO" id="GO:0015935">
    <property type="term" value="C:small ribosomal subunit"/>
    <property type="evidence" value="ECO:0007669"/>
    <property type="project" value="InterPro"/>
</dbReference>
<dbReference type="GO" id="GO:0019843">
    <property type="term" value="F:rRNA binding"/>
    <property type="evidence" value="ECO:0007669"/>
    <property type="project" value="UniProtKB-UniRule"/>
</dbReference>
<dbReference type="GO" id="GO:0003735">
    <property type="term" value="F:structural constituent of ribosome"/>
    <property type="evidence" value="ECO:0007669"/>
    <property type="project" value="InterPro"/>
</dbReference>
<dbReference type="GO" id="GO:0000049">
    <property type="term" value="F:tRNA binding"/>
    <property type="evidence" value="ECO:0007669"/>
    <property type="project" value="UniProtKB-UniRule"/>
</dbReference>
<dbReference type="GO" id="GO:0006412">
    <property type="term" value="P:translation"/>
    <property type="evidence" value="ECO:0007669"/>
    <property type="project" value="UniProtKB-UniRule"/>
</dbReference>
<dbReference type="CDD" id="cd14869">
    <property type="entry name" value="uS7_Bacteria"/>
    <property type="match status" value="1"/>
</dbReference>
<dbReference type="FunFam" id="1.10.455.10:FF:000001">
    <property type="entry name" value="30S ribosomal protein S7"/>
    <property type="match status" value="1"/>
</dbReference>
<dbReference type="Gene3D" id="1.10.455.10">
    <property type="entry name" value="Ribosomal protein S7 domain"/>
    <property type="match status" value="1"/>
</dbReference>
<dbReference type="HAMAP" id="MF_00480_B">
    <property type="entry name" value="Ribosomal_uS7_B"/>
    <property type="match status" value="1"/>
</dbReference>
<dbReference type="InterPro" id="IPR000235">
    <property type="entry name" value="Ribosomal_uS7"/>
</dbReference>
<dbReference type="InterPro" id="IPR005717">
    <property type="entry name" value="Ribosomal_uS7_bac/org-type"/>
</dbReference>
<dbReference type="InterPro" id="IPR020606">
    <property type="entry name" value="Ribosomal_uS7_CS"/>
</dbReference>
<dbReference type="InterPro" id="IPR023798">
    <property type="entry name" value="Ribosomal_uS7_dom"/>
</dbReference>
<dbReference type="InterPro" id="IPR036823">
    <property type="entry name" value="Ribosomal_uS7_dom_sf"/>
</dbReference>
<dbReference type="NCBIfam" id="TIGR01029">
    <property type="entry name" value="rpsG_bact"/>
    <property type="match status" value="1"/>
</dbReference>
<dbReference type="PANTHER" id="PTHR11205">
    <property type="entry name" value="RIBOSOMAL PROTEIN S7"/>
    <property type="match status" value="1"/>
</dbReference>
<dbReference type="Pfam" id="PF00177">
    <property type="entry name" value="Ribosomal_S7"/>
    <property type="match status" value="1"/>
</dbReference>
<dbReference type="PIRSF" id="PIRSF002122">
    <property type="entry name" value="RPS7p_RPS7a_RPS5e_RPS7o"/>
    <property type="match status" value="1"/>
</dbReference>
<dbReference type="SUPFAM" id="SSF47973">
    <property type="entry name" value="Ribosomal protein S7"/>
    <property type="match status" value="1"/>
</dbReference>
<dbReference type="PROSITE" id="PS00052">
    <property type="entry name" value="RIBOSOMAL_S7"/>
    <property type="match status" value="1"/>
</dbReference>
<organism>
    <name type="scientific">Bacillus cereus (strain G9842)</name>
    <dbReference type="NCBI Taxonomy" id="405531"/>
    <lineage>
        <taxon>Bacteria</taxon>
        <taxon>Bacillati</taxon>
        <taxon>Bacillota</taxon>
        <taxon>Bacilli</taxon>
        <taxon>Bacillales</taxon>
        <taxon>Bacillaceae</taxon>
        <taxon>Bacillus</taxon>
        <taxon>Bacillus cereus group</taxon>
    </lineage>
</organism>
<feature type="chain" id="PRO_1000125893" description="Small ribosomal subunit protein uS7">
    <location>
        <begin position="1"/>
        <end position="156"/>
    </location>
</feature>
<evidence type="ECO:0000255" key="1">
    <source>
        <dbReference type="HAMAP-Rule" id="MF_00480"/>
    </source>
</evidence>
<evidence type="ECO:0000305" key="2"/>
<name>RS7_BACC2</name>
<comment type="function">
    <text evidence="1">One of the primary rRNA binding proteins, it binds directly to 16S rRNA where it nucleates assembly of the head domain of the 30S subunit. Is located at the subunit interface close to the decoding center, probably blocks exit of the E-site tRNA.</text>
</comment>
<comment type="subunit">
    <text evidence="1">Part of the 30S ribosomal subunit. Contacts proteins S9 and S11.</text>
</comment>
<comment type="similarity">
    <text evidence="1">Belongs to the universal ribosomal protein uS7 family.</text>
</comment>
<keyword id="KW-0687">Ribonucleoprotein</keyword>
<keyword id="KW-0689">Ribosomal protein</keyword>
<keyword id="KW-0694">RNA-binding</keyword>
<keyword id="KW-0699">rRNA-binding</keyword>
<keyword id="KW-0820">tRNA-binding</keyword>
<gene>
    <name evidence="1" type="primary">rpsG</name>
    <name type="ordered locus">BCG9842_B5199</name>
</gene>
<accession>B7IT15</accession>
<sequence>MPRKGPVAKRDVLPDPMYNSKLVTRLINKMMVDGKKGKSQTILYNAFDIVRERSDKEPMEVFEQALKNIMPVLEVRARRVGGANYQVPVEVRPERRTTLGLRWLVNYARLRGEKTMEERLAYEILDAANNAGASVKKREDTHKMAEANKAFAHYRW</sequence>
<reference key="1">
    <citation type="submission" date="2008-10" db="EMBL/GenBank/DDBJ databases">
        <title>Genome sequence of Bacillus cereus G9842.</title>
        <authorList>
            <person name="Dodson R.J."/>
            <person name="Durkin A.S."/>
            <person name="Rosovitz M.J."/>
            <person name="Rasko D.A."/>
            <person name="Hoffmaster A."/>
            <person name="Ravel J."/>
            <person name="Sutton G."/>
        </authorList>
    </citation>
    <scope>NUCLEOTIDE SEQUENCE [LARGE SCALE GENOMIC DNA]</scope>
    <source>
        <strain>G9842</strain>
    </source>
</reference>